<dbReference type="EMBL" id="CR628336">
    <property type="protein sequence ID" value="CAH11561.1"/>
    <property type="molecule type" value="Genomic_DNA"/>
</dbReference>
<dbReference type="RefSeq" id="WP_010946097.1">
    <property type="nucleotide sequence ID" value="NC_006368.1"/>
</dbReference>
<dbReference type="SMR" id="Q5X840"/>
<dbReference type="GeneID" id="57034351"/>
<dbReference type="KEGG" id="lpp:lpp0413"/>
<dbReference type="LegioList" id="lpp0413"/>
<dbReference type="HOGENOM" id="CLU_055188_4_2_6"/>
<dbReference type="GO" id="GO:0022625">
    <property type="term" value="C:cytosolic large ribosomal subunit"/>
    <property type="evidence" value="ECO:0007669"/>
    <property type="project" value="TreeGrafter"/>
</dbReference>
<dbReference type="GO" id="GO:0019843">
    <property type="term" value="F:rRNA binding"/>
    <property type="evidence" value="ECO:0007669"/>
    <property type="project" value="UniProtKB-UniRule"/>
</dbReference>
<dbReference type="GO" id="GO:0003735">
    <property type="term" value="F:structural constituent of ribosome"/>
    <property type="evidence" value="ECO:0007669"/>
    <property type="project" value="InterPro"/>
</dbReference>
<dbReference type="GO" id="GO:0006412">
    <property type="term" value="P:translation"/>
    <property type="evidence" value="ECO:0007669"/>
    <property type="project" value="UniProtKB-UniRule"/>
</dbReference>
<dbReference type="Gene3D" id="3.100.10.10">
    <property type="match status" value="1"/>
</dbReference>
<dbReference type="HAMAP" id="MF_01341">
    <property type="entry name" value="Ribosomal_uL15"/>
    <property type="match status" value="1"/>
</dbReference>
<dbReference type="InterPro" id="IPR030878">
    <property type="entry name" value="Ribosomal_uL15"/>
</dbReference>
<dbReference type="InterPro" id="IPR021131">
    <property type="entry name" value="Ribosomal_uL15/eL18"/>
</dbReference>
<dbReference type="InterPro" id="IPR036227">
    <property type="entry name" value="Ribosomal_uL15/eL18_sf"/>
</dbReference>
<dbReference type="InterPro" id="IPR005749">
    <property type="entry name" value="Ribosomal_uL15_bac-type"/>
</dbReference>
<dbReference type="InterPro" id="IPR001196">
    <property type="entry name" value="Ribosomal_uL15_CS"/>
</dbReference>
<dbReference type="NCBIfam" id="TIGR01071">
    <property type="entry name" value="rplO_bact"/>
    <property type="match status" value="1"/>
</dbReference>
<dbReference type="PANTHER" id="PTHR12934">
    <property type="entry name" value="50S RIBOSOMAL PROTEIN L15"/>
    <property type="match status" value="1"/>
</dbReference>
<dbReference type="PANTHER" id="PTHR12934:SF11">
    <property type="entry name" value="LARGE RIBOSOMAL SUBUNIT PROTEIN UL15M"/>
    <property type="match status" value="1"/>
</dbReference>
<dbReference type="Pfam" id="PF00828">
    <property type="entry name" value="Ribosomal_L27A"/>
    <property type="match status" value="1"/>
</dbReference>
<dbReference type="SUPFAM" id="SSF52080">
    <property type="entry name" value="Ribosomal proteins L15p and L18e"/>
    <property type="match status" value="1"/>
</dbReference>
<dbReference type="PROSITE" id="PS00475">
    <property type="entry name" value="RIBOSOMAL_L15"/>
    <property type="match status" value="1"/>
</dbReference>
<evidence type="ECO:0000255" key="1">
    <source>
        <dbReference type="HAMAP-Rule" id="MF_01341"/>
    </source>
</evidence>
<evidence type="ECO:0000256" key="2">
    <source>
        <dbReference type="SAM" id="MobiDB-lite"/>
    </source>
</evidence>
<evidence type="ECO:0000305" key="3"/>
<accession>Q5X840</accession>
<feature type="chain" id="PRO_0000104741" description="Large ribosomal subunit protein uL15">
    <location>
        <begin position="1"/>
        <end position="144"/>
    </location>
</feature>
<feature type="region of interest" description="Disordered" evidence="2">
    <location>
        <begin position="1"/>
        <end position="45"/>
    </location>
</feature>
<feature type="compositionally biased region" description="Gly residues" evidence="2">
    <location>
        <begin position="21"/>
        <end position="31"/>
    </location>
</feature>
<gene>
    <name evidence="1" type="primary">rplO</name>
    <name type="ordered locus">lpp0413</name>
</gene>
<organism>
    <name type="scientific">Legionella pneumophila (strain Paris)</name>
    <dbReference type="NCBI Taxonomy" id="297246"/>
    <lineage>
        <taxon>Bacteria</taxon>
        <taxon>Pseudomonadati</taxon>
        <taxon>Pseudomonadota</taxon>
        <taxon>Gammaproteobacteria</taxon>
        <taxon>Legionellales</taxon>
        <taxon>Legionellaceae</taxon>
        <taxon>Legionella</taxon>
    </lineage>
</organism>
<keyword id="KW-0687">Ribonucleoprotein</keyword>
<keyword id="KW-0689">Ribosomal protein</keyword>
<keyword id="KW-0694">RNA-binding</keyword>
<keyword id="KW-0699">rRNA-binding</keyword>
<protein>
    <recommendedName>
        <fullName evidence="1">Large ribosomal subunit protein uL15</fullName>
    </recommendedName>
    <alternativeName>
        <fullName evidence="3">50S ribosomal protein L15</fullName>
    </alternativeName>
</protein>
<reference key="1">
    <citation type="journal article" date="2004" name="Nat. Genet.">
        <title>Evidence in the Legionella pneumophila genome for exploitation of host cell functions and high genome plasticity.</title>
        <authorList>
            <person name="Cazalet C."/>
            <person name="Rusniok C."/>
            <person name="Brueggemann H."/>
            <person name="Zidane N."/>
            <person name="Magnier A."/>
            <person name="Ma L."/>
            <person name="Tichit M."/>
            <person name="Jarraud S."/>
            <person name="Bouchier C."/>
            <person name="Vandenesch F."/>
            <person name="Kunst F."/>
            <person name="Etienne J."/>
            <person name="Glaser P."/>
            <person name="Buchrieser C."/>
        </authorList>
    </citation>
    <scope>NUCLEOTIDE SEQUENCE [LARGE SCALE GENOMIC DNA]</scope>
    <source>
        <strain>Paris</strain>
    </source>
</reference>
<comment type="function">
    <text evidence="1">Binds to the 23S rRNA.</text>
</comment>
<comment type="subunit">
    <text evidence="1">Part of the 50S ribosomal subunit.</text>
</comment>
<comment type="similarity">
    <text evidence="1">Belongs to the universal ribosomal protein uL15 family.</text>
</comment>
<proteinExistence type="inferred from homology"/>
<name>RL15_LEGPA</name>
<sequence>MNLNTLSPDPGSRPSRRRVGRGIGSGLGKTCGKGHKGQKSRAGGYHKINFEGGQMPIQRRLPKMGFKSRVGRTIDEVSLGELAKLNDEVIDLVALRKAGLINNSIKDVKVILSGELTAAIKLKGLRVTKGARSAIESLGGSIEE</sequence>